<accession>Q01709</accession>
<organism>
    <name type="scientific">Pseudomonas aeruginosa</name>
    <dbReference type="NCBI Taxonomy" id="287"/>
    <lineage>
        <taxon>Bacteria</taxon>
        <taxon>Pseudomonadati</taxon>
        <taxon>Pseudomonadota</taxon>
        <taxon>Gammaproteobacteria</taxon>
        <taxon>Pseudomonadales</taxon>
        <taxon>Pseudomonadaceae</taxon>
        <taxon>Pseudomonas</taxon>
    </lineage>
</organism>
<sequence>CRYICPLGAALAIPSKFRLFDWLKRRKECGNPCQLCAKECEIQAIHPDGRINGNECHYCLDCQMTYHNDNKCPPLINKRKKRGKKAADPQLIPAVEVSDA</sequence>
<dbReference type="EMBL" id="X65277">
    <property type="protein sequence ID" value="CAA46380.1"/>
    <property type="molecule type" value="Genomic_DNA"/>
</dbReference>
<dbReference type="GO" id="GO:0005886">
    <property type="term" value="C:plasma membrane"/>
    <property type="evidence" value="ECO:0007669"/>
    <property type="project" value="UniProtKB-SubCell"/>
</dbReference>
<dbReference type="GO" id="GO:0003677">
    <property type="term" value="F:DNA binding"/>
    <property type="evidence" value="ECO:0007669"/>
    <property type="project" value="UniProtKB-KW"/>
</dbReference>
<dbReference type="InterPro" id="IPR052378">
    <property type="entry name" value="NosR_regulator"/>
</dbReference>
<dbReference type="PANTHER" id="PTHR30224">
    <property type="entry name" value="ELECTRON TRANSPORT PROTEIN"/>
    <property type="match status" value="1"/>
</dbReference>
<dbReference type="PANTHER" id="PTHR30224:SF4">
    <property type="entry name" value="ELECTRON TRANSPORT PROTEIN YCCM-RELATED"/>
    <property type="match status" value="1"/>
</dbReference>
<keyword id="KW-0010">Activator</keyword>
<keyword id="KW-1003">Cell membrane</keyword>
<keyword id="KW-0238">DNA-binding</keyword>
<keyword id="KW-0472">Membrane</keyword>
<keyword id="KW-0804">Transcription</keyword>
<keyword id="KW-0805">Transcription regulation</keyword>
<comment type="function">
    <text>Transcriptional activator of the nitrous-oxide reductase gene NosZ.</text>
</comment>
<comment type="subcellular location">
    <subcellularLocation>
        <location evidence="1">Cell membrane</location>
        <topology evidence="1">Peripheral membrane protein</topology>
    </subcellularLocation>
</comment>
<proteinExistence type="predicted"/>
<name>NOSR_PSEAI</name>
<protein>
    <recommendedName>
        <fullName>Regulatory protein NosR</fullName>
    </recommendedName>
</protein>
<evidence type="ECO:0000305" key="1"/>
<reference key="1">
    <citation type="journal article" date="1992" name="Eur. J. Biochem.">
        <title>Derived amino acid sequences of the nosZ gene (respiratory N2O reductase) from Alcaligenes eutrophus, Pseudomonas aeruginosa and Pseudomonas stutzeri reveal potential copper-binding residues. Implications for the CuA site of N2O reductase and cytochrome-c oxidase.</title>
        <authorList>
            <person name="Zumft W.G."/>
            <person name="Dreusch A."/>
            <person name="Loechelt S."/>
            <person name="Cuypers H."/>
            <person name="Friedrich B."/>
            <person name="Schneider B."/>
        </authorList>
    </citation>
    <scope>NUCLEOTIDE SEQUENCE [GENOMIC DNA]</scope>
    <source>
        <strain>ATCC 10145 / DSM 50071 / JCM 5962 / LMG 1242 / NBRC 12689 / NCIMB 8295 / NCTC 10332 / NRRL B-771</strain>
    </source>
</reference>
<feature type="chain" id="PRO_0000057967" description="Regulatory protein NosR">
    <location>
        <begin position="1" status="less than"/>
        <end position="100"/>
    </location>
</feature>
<feature type="non-terminal residue">
    <location>
        <position position="1"/>
    </location>
</feature>
<gene>
    <name type="primary">nosR</name>
</gene>